<name>KPSU5_ECOLX</name>
<dbReference type="EC" id="2.7.7.38" evidence="1"/>
<dbReference type="EMBL" id="X74567">
    <property type="protein sequence ID" value="CAA52657.1"/>
    <property type="molecule type" value="Genomic_DNA"/>
</dbReference>
<dbReference type="EMBL" id="S76943">
    <property type="protein sequence ID" value="AAB33584.1"/>
    <property type="molecule type" value="Genomic_DNA"/>
</dbReference>
<dbReference type="PIR" id="C48492">
    <property type="entry name" value="C48492"/>
</dbReference>
<dbReference type="PDB" id="1GQ9">
    <property type="method" value="X-ray"/>
    <property type="resolution" value="2.60 A"/>
    <property type="chains" value="A/B=2-246"/>
</dbReference>
<dbReference type="PDB" id="1GQC">
    <property type="method" value="X-ray"/>
    <property type="resolution" value="2.60 A"/>
    <property type="chains" value="A/B=2-246"/>
</dbReference>
<dbReference type="PDB" id="1H6J">
    <property type="method" value="X-ray"/>
    <property type="resolution" value="2.32 A"/>
    <property type="chains" value="A/B=2-246"/>
</dbReference>
<dbReference type="PDB" id="1H7E">
    <property type="method" value="X-ray"/>
    <property type="resolution" value="1.83 A"/>
    <property type="chains" value="A/B=2-246"/>
</dbReference>
<dbReference type="PDB" id="1H7F">
    <property type="method" value="X-ray"/>
    <property type="resolution" value="2.12 A"/>
    <property type="chains" value="A/B=2-246"/>
</dbReference>
<dbReference type="PDB" id="1H7G">
    <property type="method" value="X-ray"/>
    <property type="resolution" value="2.13 A"/>
    <property type="chains" value="A/B=2-246"/>
</dbReference>
<dbReference type="PDB" id="1H7H">
    <property type="method" value="X-ray"/>
    <property type="resolution" value="2.30 A"/>
    <property type="chains" value="A/B=2-246"/>
</dbReference>
<dbReference type="PDB" id="1H7T">
    <property type="method" value="X-ray"/>
    <property type="resolution" value="2.48 A"/>
    <property type="chains" value="A/B=2-246"/>
</dbReference>
<dbReference type="PDBsum" id="1GQ9"/>
<dbReference type="PDBsum" id="1GQC"/>
<dbReference type="PDBsum" id="1H6J"/>
<dbReference type="PDBsum" id="1H7E"/>
<dbReference type="PDBsum" id="1H7F"/>
<dbReference type="PDBsum" id="1H7G"/>
<dbReference type="PDBsum" id="1H7H"/>
<dbReference type="PDBsum" id="1H7T"/>
<dbReference type="SMR" id="P42216"/>
<dbReference type="DrugBank" id="DB04482">
    <property type="generic name" value="Cmp-2-Keto-3-Deoxy-Octulosonic Acid"/>
</dbReference>
<dbReference type="DrugBank" id="DB04555">
    <property type="generic name" value="Cytidine-5'-Diphosphate"/>
</dbReference>
<dbReference type="DrugBank" id="DB03403">
    <property type="generic name" value="Cytidine-5'-Monophosphate"/>
</dbReference>
<dbReference type="DrugBank" id="DB02431">
    <property type="generic name" value="Cytidine-5'-Triphosphate"/>
</dbReference>
<dbReference type="DrugBank" id="DB03721">
    <property type="generic name" value="N-acetyl-alpha-neuraminic acid"/>
</dbReference>
<dbReference type="OMA" id="PLIVRTW"/>
<dbReference type="BRENDA" id="2.7.7.38">
    <property type="organism ID" value="2026"/>
</dbReference>
<dbReference type="UniPathway" id="UPA00030"/>
<dbReference type="UniPathway" id="UPA00358">
    <property type="reaction ID" value="UER00476"/>
</dbReference>
<dbReference type="EvolutionaryTrace" id="P42216"/>
<dbReference type="GO" id="GO:0005829">
    <property type="term" value="C:cytosol"/>
    <property type="evidence" value="ECO:0007669"/>
    <property type="project" value="TreeGrafter"/>
</dbReference>
<dbReference type="GO" id="GO:0008690">
    <property type="term" value="F:3-deoxy-manno-octulosonate cytidylyltransferase activity"/>
    <property type="evidence" value="ECO:0007669"/>
    <property type="project" value="UniProtKB-UniRule"/>
</dbReference>
<dbReference type="GO" id="GO:0033468">
    <property type="term" value="P:CMP-keto-3-deoxy-D-manno-octulosonic acid biosynthetic process"/>
    <property type="evidence" value="ECO:0007669"/>
    <property type="project" value="UniProtKB-UniRule"/>
</dbReference>
<dbReference type="GO" id="GO:0009103">
    <property type="term" value="P:lipopolysaccharide biosynthetic process"/>
    <property type="evidence" value="ECO:0007669"/>
    <property type="project" value="UniProtKB-UniRule"/>
</dbReference>
<dbReference type="CDD" id="cd02517">
    <property type="entry name" value="CMP-KDO-Synthetase"/>
    <property type="match status" value="1"/>
</dbReference>
<dbReference type="FunFam" id="3.90.550.10:FF:000011">
    <property type="entry name" value="3-deoxy-manno-octulosonate cytidylyltransferase"/>
    <property type="match status" value="1"/>
</dbReference>
<dbReference type="Gene3D" id="3.90.550.10">
    <property type="entry name" value="Spore Coat Polysaccharide Biosynthesis Protein SpsA, Chain A"/>
    <property type="match status" value="1"/>
</dbReference>
<dbReference type="HAMAP" id="MF_00057">
    <property type="entry name" value="KdsB"/>
    <property type="match status" value="1"/>
</dbReference>
<dbReference type="InterPro" id="IPR003329">
    <property type="entry name" value="Cytidylyl_trans"/>
</dbReference>
<dbReference type="InterPro" id="IPR004528">
    <property type="entry name" value="KdsB"/>
</dbReference>
<dbReference type="InterPro" id="IPR029044">
    <property type="entry name" value="Nucleotide-diphossugar_trans"/>
</dbReference>
<dbReference type="NCBIfam" id="TIGR00466">
    <property type="entry name" value="kdsB"/>
    <property type="match status" value="1"/>
</dbReference>
<dbReference type="NCBIfam" id="NF003950">
    <property type="entry name" value="PRK05450.1-3"/>
    <property type="match status" value="1"/>
</dbReference>
<dbReference type="NCBIfam" id="NF003952">
    <property type="entry name" value="PRK05450.1-5"/>
    <property type="match status" value="1"/>
</dbReference>
<dbReference type="NCBIfam" id="NF009905">
    <property type="entry name" value="PRK13368.1"/>
    <property type="match status" value="1"/>
</dbReference>
<dbReference type="PANTHER" id="PTHR42866">
    <property type="entry name" value="3-DEOXY-MANNO-OCTULOSONATE CYTIDYLYLTRANSFERASE"/>
    <property type="match status" value="1"/>
</dbReference>
<dbReference type="PANTHER" id="PTHR42866:SF2">
    <property type="entry name" value="3-DEOXY-MANNO-OCTULOSONATE CYTIDYLYLTRANSFERASE, MITOCHONDRIAL"/>
    <property type="match status" value="1"/>
</dbReference>
<dbReference type="Pfam" id="PF02348">
    <property type="entry name" value="CTP_transf_3"/>
    <property type="match status" value="1"/>
</dbReference>
<dbReference type="SUPFAM" id="SSF53448">
    <property type="entry name" value="Nucleotide-diphospho-sugar transferases"/>
    <property type="match status" value="1"/>
</dbReference>
<organism>
    <name type="scientific">Escherichia coli</name>
    <dbReference type="NCBI Taxonomy" id="562"/>
    <lineage>
        <taxon>Bacteria</taxon>
        <taxon>Pseudomonadati</taxon>
        <taxon>Pseudomonadota</taxon>
        <taxon>Gammaproteobacteria</taxon>
        <taxon>Enterobacterales</taxon>
        <taxon>Enterobacteriaceae</taxon>
        <taxon>Escherichia</taxon>
    </lineage>
</organism>
<accession>P42216</accession>
<proteinExistence type="evidence at protein level"/>
<reference key="1">
    <citation type="journal article" date="1993" name="J. Bacteriol.">
        <title>Molecular analysis of region 1 of the Escherichia coli K5 antigen gene cluster: a region encoding proteins involved in cell surface expression of capsular polysaccharide.</title>
        <authorList>
            <person name="Pazzani C."/>
            <person name="Rosenow C."/>
            <person name="Boulnois G.J."/>
            <person name="Bronner D."/>
            <person name="Jann K."/>
            <person name="Roberts I.S."/>
        </authorList>
    </citation>
    <scope>NUCLEOTIDE SEQUENCE [GENOMIC DNA]</scope>
    <source>
        <strain>K5</strain>
    </source>
</reference>
<reference key="2">
    <citation type="journal article" date="1995" name="FEMS Microbiol. Lett.">
        <title>Isolation from recombinant Escherichia coli and characterization of CMP-Kdo synthetase, involved in the expression of the capsular K5 polysaccharide (K-CKS).</title>
        <authorList>
            <person name="Rosenow C."/>
            <person name="Roberts I.S."/>
            <person name="Jann K."/>
        </authorList>
    </citation>
    <scope>NUCLEOTIDE SEQUENCE [GENOMIC DNA]</scope>
</reference>
<reference key="3">
    <citation type="journal article" date="1996" name="FEBS Lett.">
        <title>The three-dimensional structure of capsule-specific CMP: 2-keto-3-deoxy-manno-octonic acid synthetase from Escherichia coli.</title>
        <authorList>
            <person name="Jelakovic S."/>
            <person name="Jann K."/>
            <person name="Schulz G.E."/>
        </authorList>
    </citation>
    <scope>X-RAY CRYSTALLOGRAPHY (2.3 ANGSTROMS)</scope>
</reference>
<comment type="function">
    <text evidence="1">Activates KDO (a required 8-carbon sugar) for incorporation into bacterial lipopolysaccharide in Gram-negative bacteria.</text>
</comment>
<comment type="catalytic activity">
    <reaction evidence="1">
        <text>3-deoxy-alpha-D-manno-oct-2-ulosonate + CTP = CMP-3-deoxy-beta-D-manno-octulosonate + diphosphate</text>
        <dbReference type="Rhea" id="RHEA:23448"/>
        <dbReference type="ChEBI" id="CHEBI:33019"/>
        <dbReference type="ChEBI" id="CHEBI:37563"/>
        <dbReference type="ChEBI" id="CHEBI:85986"/>
        <dbReference type="ChEBI" id="CHEBI:85987"/>
        <dbReference type="EC" id="2.7.7.38"/>
    </reaction>
</comment>
<comment type="pathway">
    <text evidence="1">Nucleotide-sugar biosynthesis; CMP-3-deoxy-D-manno-octulosonate biosynthesis; CMP-3-deoxy-D-manno-octulosonate from 3-deoxy-D-manno-octulosonate and CTP: step 1/1.</text>
</comment>
<comment type="pathway">
    <text>Bacterial outer membrane biogenesis; lipopolysaccharide biosynthesis.</text>
</comment>
<comment type="subunit">
    <text>Homodimer.</text>
</comment>
<comment type="subcellular location">
    <subcellularLocation>
        <location evidence="1">Cytoplasm</location>
    </subcellularLocation>
</comment>
<comment type="similarity">
    <text evidence="1">Belongs to the KdsB family.</text>
</comment>
<keyword id="KW-0002">3D-structure</keyword>
<keyword id="KW-0963">Cytoplasm</keyword>
<keyword id="KW-0448">Lipopolysaccharide biosynthesis</keyword>
<keyword id="KW-0548">Nucleotidyltransferase</keyword>
<keyword id="KW-0808">Transferase</keyword>
<sequence length="246" mass="27159">MSKAVIVIPARYGSSRLPGKPLLDIVGKPMIQHVYERALQVAGVAEVWVATDDPRVEQAVQAFGGKAIMTRNDHESGTDRLVEVMHKVEADIYINLQGDEPMIRPRDVETLLQGMRDDPALPVATLCHAISAAEAAEPSTVKVVVNTRQDALYFSRSPIPYPRNAEKARYLKHVGIYAYRRDVLQNYSQLPESMPEQAESLEQLRLMNAGINIRTFEVAATGPGVDTPACLEKVRALMAQELAENA</sequence>
<evidence type="ECO:0000255" key="1">
    <source>
        <dbReference type="HAMAP-Rule" id="MF_00057"/>
    </source>
</evidence>
<evidence type="ECO:0007829" key="2">
    <source>
        <dbReference type="PDB" id="1GQC"/>
    </source>
</evidence>
<evidence type="ECO:0007829" key="3">
    <source>
        <dbReference type="PDB" id="1H7E"/>
    </source>
</evidence>
<protein>
    <recommendedName>
        <fullName evidence="1">3-deoxy-manno-octulosonate cytidylyltransferase</fullName>
        <ecNumber evidence="1">2.7.7.38</ecNumber>
    </recommendedName>
    <alternativeName>
        <fullName evidence="1">CMP-2-keto-3-deoxyoctulosonic acid synthase</fullName>
        <shortName evidence="1">CKS</shortName>
        <shortName evidence="1">CMP-KDO synthase</shortName>
    </alternativeName>
</protein>
<feature type="initiator methionine" description="Removed">
    <location>
        <position position="1"/>
    </location>
</feature>
<feature type="chain" id="PRO_0000188523" description="3-deoxy-manno-octulosonate cytidylyltransferase">
    <location>
        <begin position="2"/>
        <end position="246"/>
    </location>
</feature>
<feature type="strand" evidence="3">
    <location>
        <begin position="4"/>
        <end position="9"/>
    </location>
</feature>
<feature type="strand" evidence="3">
    <location>
        <begin position="15"/>
        <end position="17"/>
    </location>
</feature>
<feature type="helix" evidence="3">
    <location>
        <begin position="20"/>
        <end position="22"/>
    </location>
</feature>
<feature type="strand" evidence="2">
    <location>
        <begin position="24"/>
        <end position="29"/>
    </location>
</feature>
<feature type="helix" evidence="3">
    <location>
        <begin position="30"/>
        <end position="39"/>
    </location>
</feature>
<feature type="strand" evidence="3">
    <location>
        <begin position="46"/>
        <end position="52"/>
    </location>
</feature>
<feature type="helix" evidence="3">
    <location>
        <begin position="54"/>
        <end position="62"/>
    </location>
</feature>
<feature type="strand" evidence="3">
    <location>
        <begin position="66"/>
        <end position="69"/>
    </location>
</feature>
<feature type="helix" evidence="3">
    <location>
        <begin position="77"/>
        <end position="87"/>
    </location>
</feature>
<feature type="strand" evidence="3">
    <location>
        <begin position="91"/>
        <end position="95"/>
    </location>
</feature>
<feature type="helix" evidence="3">
    <location>
        <begin position="105"/>
        <end position="117"/>
    </location>
</feature>
<feature type="strand" evidence="3">
    <location>
        <begin position="123"/>
        <end position="130"/>
    </location>
</feature>
<feature type="helix" evidence="3">
    <location>
        <begin position="132"/>
        <end position="135"/>
    </location>
</feature>
<feature type="strand" evidence="3">
    <location>
        <begin position="142"/>
        <end position="145"/>
    </location>
</feature>
<feature type="strand" evidence="3">
    <location>
        <begin position="150"/>
        <end position="157"/>
    </location>
</feature>
<feature type="helix" evidence="3">
    <location>
        <begin position="165"/>
        <end position="167"/>
    </location>
</feature>
<feature type="strand" evidence="3">
    <location>
        <begin position="170"/>
        <end position="180"/>
    </location>
</feature>
<feature type="helix" evidence="3">
    <location>
        <begin position="181"/>
        <end position="186"/>
    </location>
</feature>
<feature type="helix" evidence="3">
    <location>
        <begin position="187"/>
        <end position="189"/>
    </location>
</feature>
<feature type="helix" evidence="3">
    <location>
        <begin position="194"/>
        <end position="199"/>
    </location>
</feature>
<feature type="helix" evidence="3">
    <location>
        <begin position="204"/>
        <end position="208"/>
    </location>
</feature>
<feature type="strand" evidence="3">
    <location>
        <begin position="213"/>
        <end position="217"/>
    </location>
</feature>
<feature type="strand" evidence="3">
    <location>
        <begin position="225"/>
        <end position="227"/>
    </location>
</feature>
<feature type="helix" evidence="3">
    <location>
        <begin position="228"/>
        <end position="244"/>
    </location>
</feature>
<gene>
    <name type="primary">kpsU</name>
</gene>